<proteinExistence type="inferred from homology"/>
<keyword id="KW-0131">Cell cycle</keyword>
<keyword id="KW-0132">Cell division</keyword>
<keyword id="KW-0963">Cytoplasm</keyword>
<keyword id="KW-0717">Septation</keyword>
<accession>Q7U8F8</accession>
<evidence type="ECO:0000255" key="1">
    <source>
        <dbReference type="HAMAP-Rule" id="MF_01197"/>
    </source>
</evidence>
<evidence type="ECO:0000256" key="2">
    <source>
        <dbReference type="SAM" id="MobiDB-lite"/>
    </source>
</evidence>
<gene>
    <name evidence="1" type="primary">sepF</name>
    <name type="ordered locus">SYNW0661</name>
</gene>
<protein>
    <recommendedName>
        <fullName evidence="1">Cell division protein SepF</fullName>
    </recommendedName>
</protein>
<organism>
    <name type="scientific">Parasynechococcus marenigrum (strain WH8102)</name>
    <dbReference type="NCBI Taxonomy" id="84588"/>
    <lineage>
        <taxon>Bacteria</taxon>
        <taxon>Bacillati</taxon>
        <taxon>Cyanobacteriota</taxon>
        <taxon>Cyanophyceae</taxon>
        <taxon>Synechococcales</taxon>
        <taxon>Prochlorococcaceae</taxon>
        <taxon>Parasynechococcus</taxon>
        <taxon>Parasynechococcus marenigrum</taxon>
    </lineage>
</organism>
<dbReference type="EMBL" id="BX569690">
    <property type="protein sequence ID" value="CAE07176.1"/>
    <property type="molecule type" value="Genomic_DNA"/>
</dbReference>
<dbReference type="RefSeq" id="WP_011127528.1">
    <property type="nucleotide sequence ID" value="NC_005070.1"/>
</dbReference>
<dbReference type="SMR" id="Q7U8F8"/>
<dbReference type="STRING" id="84588.SYNW0661"/>
<dbReference type="KEGG" id="syw:SYNW0661"/>
<dbReference type="eggNOG" id="COG1799">
    <property type="taxonomic scope" value="Bacteria"/>
</dbReference>
<dbReference type="HOGENOM" id="CLU_078499_1_0_3"/>
<dbReference type="Proteomes" id="UP000001422">
    <property type="component" value="Chromosome"/>
</dbReference>
<dbReference type="GO" id="GO:0005737">
    <property type="term" value="C:cytoplasm"/>
    <property type="evidence" value="ECO:0007669"/>
    <property type="project" value="UniProtKB-SubCell"/>
</dbReference>
<dbReference type="GO" id="GO:0000917">
    <property type="term" value="P:division septum assembly"/>
    <property type="evidence" value="ECO:0007669"/>
    <property type="project" value="UniProtKB-KW"/>
</dbReference>
<dbReference type="GO" id="GO:0043093">
    <property type="term" value="P:FtsZ-dependent cytokinesis"/>
    <property type="evidence" value="ECO:0007669"/>
    <property type="project" value="UniProtKB-UniRule"/>
</dbReference>
<dbReference type="Gene3D" id="3.30.110.150">
    <property type="entry name" value="SepF-like protein"/>
    <property type="match status" value="1"/>
</dbReference>
<dbReference type="HAMAP" id="MF_01197">
    <property type="entry name" value="SepF"/>
    <property type="match status" value="1"/>
</dbReference>
<dbReference type="InterPro" id="IPR023052">
    <property type="entry name" value="Cell_div_SepF"/>
</dbReference>
<dbReference type="InterPro" id="IPR007561">
    <property type="entry name" value="Cell_div_SepF/SepF-rel"/>
</dbReference>
<dbReference type="InterPro" id="IPR038594">
    <property type="entry name" value="SepF-like_sf"/>
</dbReference>
<dbReference type="PANTHER" id="PTHR35798">
    <property type="entry name" value="CELL DIVISION PROTEIN SEPF"/>
    <property type="match status" value="1"/>
</dbReference>
<dbReference type="PANTHER" id="PTHR35798:SF1">
    <property type="entry name" value="CELL DIVISION PROTEIN SEPF"/>
    <property type="match status" value="1"/>
</dbReference>
<dbReference type="Pfam" id="PF04472">
    <property type="entry name" value="SepF"/>
    <property type="match status" value="1"/>
</dbReference>
<reference key="1">
    <citation type="journal article" date="2003" name="Nature">
        <title>The genome of a motile marine Synechococcus.</title>
        <authorList>
            <person name="Palenik B."/>
            <person name="Brahamsha B."/>
            <person name="Larimer F.W."/>
            <person name="Land M.L."/>
            <person name="Hauser L."/>
            <person name="Chain P."/>
            <person name="Lamerdin J.E."/>
            <person name="Regala W."/>
            <person name="Allen E.E."/>
            <person name="McCarren J."/>
            <person name="Paulsen I.T."/>
            <person name="Dufresne A."/>
            <person name="Partensky F."/>
            <person name="Webb E.A."/>
            <person name="Waterbury J."/>
        </authorList>
    </citation>
    <scope>NUCLEOTIDE SEQUENCE [LARGE SCALE GENOMIC DNA]</scope>
    <source>
        <strain>WH8102</strain>
    </source>
</reference>
<sequence length="188" mass="19945">MSLISRLRAVVAGDDYLDGDLDDLVYDDDQPEQDQRASQADGGALATIGDGNPFDLGDNFSGSNVIGMPGISTAAAEVNLMEPRSFDEMPRAIQALRERKTVILNLTMMEPDQAQRAVDFVAGGTFAIDGHQERVGESIFLFAPSCVTVTNTSHDEASTPTVVSRDAEAEQQQEAAAAPSPAWGATAL</sequence>
<feature type="chain" id="PRO_0000334131" description="Cell division protein SepF">
    <location>
        <begin position="1"/>
        <end position="188"/>
    </location>
</feature>
<feature type="region of interest" description="Disordered" evidence="2">
    <location>
        <begin position="152"/>
        <end position="188"/>
    </location>
</feature>
<feature type="compositionally biased region" description="Polar residues" evidence="2">
    <location>
        <begin position="152"/>
        <end position="162"/>
    </location>
</feature>
<comment type="function">
    <text evidence="1">Cell division protein that is part of the divisome complex and is recruited early to the Z-ring. Probably stimulates Z-ring formation, perhaps through the cross-linking of FtsZ protofilaments. Its function overlaps with FtsA.</text>
</comment>
<comment type="subunit">
    <text evidence="1">Homodimer. Interacts with FtsZ.</text>
</comment>
<comment type="subcellular location">
    <subcellularLocation>
        <location evidence="1">Cytoplasm</location>
    </subcellularLocation>
    <text evidence="1">Localizes to the division site, in a FtsZ-dependent manner.</text>
</comment>
<comment type="similarity">
    <text evidence="1">Belongs to the SepF family.</text>
</comment>
<name>SEPF_PARMW</name>